<comment type="function">
    <text evidence="5">Binds specifically to cytosolic chaperonin (c-CPN) and transfers target proteins to it. Binds to nascent polypeptide chain and promotes folding in an environment in which there are many competing pathways for nonnative proteins.</text>
</comment>
<comment type="subunit">
    <text evidence="1 3 4">Heterohexamer of two PFD-alpha type and four PFD-beta type subunits (By similarity). Component of the PAQosome complex which is responsible for the biogenesis of several protein complexes and which consists of R2TP complex members RUVBL1, RUVBL2, RPAP3 and PIH1D1, URI complex members PFDN2, PFDN6, PDRG1, UXT and URI1 as well as ASDURF, POLR2E and DNAAF10/WDR92 (PubMed:31738558). Interacts with URI1; the interaction is phosphorylation-dependent and occurs in a growth-dependent manner (PubMed:17936702).</text>
</comment>
<comment type="interaction">
    <interactant intactId="EBI-359873">
        <id>Q9UHV9</id>
    </interactant>
    <interactant intactId="EBI-12847580">
        <id>P07108-2</id>
        <label>DBI</label>
    </interactant>
    <organismsDiffer>false</organismsDiffer>
    <experiments>3</experiments>
</comment>
<comment type="interaction">
    <interactant intactId="EBI-359873">
        <id>Q9UHV9</id>
    </interactant>
    <interactant intactId="EBI-307050">
        <id>Q9NUG6</id>
        <label>PDRG1</label>
    </interactant>
    <organismsDiffer>false</organismsDiffer>
    <experiments>4</experiments>
</comment>
<comment type="interaction">
    <interactant intactId="EBI-359873">
        <id>Q9UHV9</id>
    </interactant>
    <interactant intactId="EBI-356919">
        <id>O60925</id>
        <label>PFDN1</label>
    </interactant>
    <organismsDiffer>false</organismsDiffer>
    <experiments>5</experiments>
</comment>
<comment type="interaction">
    <interactant intactId="EBI-359873">
        <id>Q9UHV9</id>
    </interactant>
    <interactant intactId="EBI-357275">
        <id>Q99471</id>
        <label>PFDN5</label>
    </interactant>
    <organismsDiffer>false</organismsDiffer>
    <experiments>7</experiments>
</comment>
<comment type="interaction">
    <interactant intactId="EBI-359873">
        <id>Q9UHV9</id>
    </interactant>
    <interactant intactId="EBI-2515113">
        <id>O14802</id>
        <label>POLR3A</label>
    </interactant>
    <organismsDiffer>false</organismsDiffer>
    <experiments>2</experiments>
</comment>
<comment type="interaction">
    <interactant intactId="EBI-359873">
        <id>Q9UHV9</id>
    </interactant>
    <interactant intactId="EBI-413628">
        <id>P63000</id>
        <label>RAC1</label>
    </interactant>
    <organismsDiffer>false</organismsDiffer>
    <experiments>3</experiments>
</comment>
<comment type="interaction">
    <interactant intactId="EBI-359873">
        <id>Q9UHV9</id>
    </interactant>
    <interactant intactId="EBI-356928">
        <id>Q9H6T3</id>
        <label>RPAP3</label>
    </interactant>
    <organismsDiffer>false</organismsDiffer>
    <experiments>3</experiments>
</comment>
<comment type="interaction">
    <interactant intactId="EBI-359873">
        <id>Q9UHV9</id>
    </interactant>
    <interactant intactId="EBI-1052596">
        <id>P31930</id>
        <label>UQCRC1</label>
    </interactant>
    <organismsDiffer>false</organismsDiffer>
    <experiments>3</experiments>
</comment>
<comment type="interaction">
    <interactant intactId="EBI-359873">
        <id>Q9UHV9</id>
    </interactant>
    <interactant intactId="EBI-357067">
        <id>O94763</id>
        <label>URI1</label>
    </interactant>
    <organismsDiffer>false</organismsDiffer>
    <experiments>4</experiments>
</comment>
<comment type="interaction">
    <interactant intactId="EBI-359873">
        <id>Q9UHV9</id>
    </interactant>
    <interactant intactId="EBI-357355">
        <id>Q9UBK9</id>
        <label>UXT</label>
    </interactant>
    <organismsDiffer>false</organismsDiffer>
    <experiments>4</experiments>
</comment>
<comment type="interaction">
    <interactant intactId="EBI-359873">
        <id>Q9UHV9</id>
    </interactant>
    <interactant intactId="EBI-357430">
        <id>P61758</id>
        <label>VBP1</label>
    </interactant>
    <organismsDiffer>false</organismsDiffer>
    <experiments>9</experiments>
</comment>
<comment type="interaction">
    <interactant intactId="EBI-359873">
        <id>Q9UHV9</id>
    </interactant>
    <interactant intactId="EBI-719743">
        <id>Q9NYS7</id>
        <label>WSB2</label>
    </interactant>
    <organismsDiffer>false</organismsDiffer>
    <experiments>2</experiments>
</comment>
<comment type="interaction">
    <interactant intactId="EBI-359873">
        <id>Q9UHV9</id>
    </interactant>
    <interactant intactId="EBI-18338284">
        <id>A6NNF4-2</id>
        <label>ZNF726</label>
    </interactant>
    <organismsDiffer>false</organismsDiffer>
    <experiments>3</experiments>
</comment>
<comment type="interaction">
    <interactant intactId="EBI-359873">
        <id>Q9UHV9</id>
    </interactant>
    <interactant intactId="EBI-9351969">
        <id>P0C045</id>
    </interactant>
    <organismsDiffer>true</organismsDiffer>
    <experiments>4</experiments>
</comment>
<comment type="subcellular location">
    <subcellularLocation>
        <location evidence="3">Nucleus</location>
    </subcellularLocation>
    <subcellularLocation>
        <location evidence="3">Cytoplasm</location>
    </subcellularLocation>
    <subcellularLocation>
        <location evidence="3">Mitochondrion</location>
    </subcellularLocation>
</comment>
<comment type="similarity">
    <text evidence="6">Belongs to the prefoldin subunit beta family.</text>
</comment>
<comment type="sequence caution" evidence="6">
    <conflict type="frameshift">
        <sequence resource="EMBL-CDS" id="AAF36151"/>
    </conflict>
</comment>
<evidence type="ECO:0000250" key="1">
    <source>
        <dbReference type="UniProtKB" id="P40005"/>
    </source>
</evidence>
<evidence type="ECO:0000256" key="2">
    <source>
        <dbReference type="SAM" id="MobiDB-lite"/>
    </source>
</evidence>
<evidence type="ECO:0000269" key="3">
    <source>
    </source>
</evidence>
<evidence type="ECO:0000269" key="4">
    <source>
    </source>
</evidence>
<evidence type="ECO:0000269" key="5">
    <source>
    </source>
</evidence>
<evidence type="ECO:0000305" key="6"/>
<keyword id="KW-0002">3D-structure</keyword>
<keyword id="KW-0143">Chaperone</keyword>
<keyword id="KW-0963">Cytoplasm</keyword>
<keyword id="KW-0496">Mitochondrion</keyword>
<keyword id="KW-0539">Nucleus</keyword>
<keyword id="KW-1267">Proteomics identification</keyword>
<keyword id="KW-1185">Reference proteome</keyword>
<sequence>MAENSGRAGKSSGSGAGKGAVSAEQVIAGFNRLRQEQRGLASKAAELEMELNEHSLVIDTLKEVDETRKCYRMVGGVLVERTVKEVLPALENNKEQIQKIIETLTQQLQAKGKELNEFREKHNIRLMGEDEKPAAKENSEGAGAKASSAGVLVS</sequence>
<accession>Q9UHV9</accession>
<accession>Q9P0P7</accession>
<accession>Q9UN05</accession>
<dbReference type="EMBL" id="AF117237">
    <property type="protein sequence ID" value="AAF17218.1"/>
    <property type="molecule type" value="mRNA"/>
</dbReference>
<dbReference type="EMBL" id="AF165883">
    <property type="protein sequence ID" value="AAD47084.1"/>
    <property type="molecule type" value="mRNA"/>
</dbReference>
<dbReference type="EMBL" id="AF151065">
    <property type="protein sequence ID" value="AAF36151.1"/>
    <property type="status" value="ALT_FRAME"/>
    <property type="molecule type" value="mRNA"/>
</dbReference>
<dbReference type="EMBL" id="BC012464">
    <property type="protein sequence ID" value="AAH12464.1"/>
    <property type="molecule type" value="mRNA"/>
</dbReference>
<dbReference type="EMBL" id="BC047042">
    <property type="protein sequence ID" value="AAH47042.1"/>
    <property type="molecule type" value="mRNA"/>
</dbReference>
<dbReference type="CCDS" id="CCDS1217.1"/>
<dbReference type="RefSeq" id="NP_036526.2">
    <property type="nucleotide sequence ID" value="NM_012394.3"/>
</dbReference>
<dbReference type="RefSeq" id="XP_011507926.1">
    <property type="nucleotide sequence ID" value="XM_011509624.2"/>
</dbReference>
<dbReference type="PDB" id="6NR8">
    <property type="method" value="EM"/>
    <property type="resolution" value="7.80 A"/>
    <property type="chains" value="2=22-124"/>
</dbReference>
<dbReference type="PDB" id="6NR9">
    <property type="method" value="EM"/>
    <property type="resolution" value="8.50 A"/>
    <property type="chains" value="2=22-124"/>
</dbReference>
<dbReference type="PDB" id="6NRB">
    <property type="method" value="EM"/>
    <property type="resolution" value="8.70 A"/>
    <property type="chains" value="2=22-124"/>
</dbReference>
<dbReference type="PDB" id="6NRC">
    <property type="method" value="EM"/>
    <property type="resolution" value="8.30 A"/>
    <property type="chains" value="2=22-124"/>
</dbReference>
<dbReference type="PDB" id="6NRD">
    <property type="method" value="EM"/>
    <property type="resolution" value="8.20 A"/>
    <property type="chains" value="2=22-124"/>
</dbReference>
<dbReference type="PDB" id="7WU7">
    <property type="method" value="EM"/>
    <property type="resolution" value="3.85 A"/>
    <property type="chains" value="2=1-154"/>
</dbReference>
<dbReference type="PDBsum" id="6NR8"/>
<dbReference type="PDBsum" id="6NR9"/>
<dbReference type="PDBsum" id="6NRB"/>
<dbReference type="PDBsum" id="6NRC"/>
<dbReference type="PDBsum" id="6NRD"/>
<dbReference type="PDBsum" id="7WU7"/>
<dbReference type="EMDB" id="EMD-0490"/>
<dbReference type="EMDB" id="EMD-0491"/>
<dbReference type="EMDB" id="EMD-0493"/>
<dbReference type="EMDB" id="EMD-0494"/>
<dbReference type="EMDB" id="EMD-0495"/>
<dbReference type="EMDB" id="EMD-32823"/>
<dbReference type="SMR" id="Q9UHV9"/>
<dbReference type="BioGRID" id="111224">
    <property type="interactions" value="264"/>
</dbReference>
<dbReference type="ComplexPortal" id="CPX-25767">
    <property type="entry name" value="Prefoldin co-chaperone complex"/>
</dbReference>
<dbReference type="ComplexPortal" id="CPX-6144">
    <property type="entry name" value="Prefoldin co-chaperone complex, URI1 variant"/>
</dbReference>
<dbReference type="ComplexPortal" id="CPX-6149">
    <property type="entry name" value="Prefoldin co-chaperone complex"/>
</dbReference>
<dbReference type="CORUM" id="Q9UHV9"/>
<dbReference type="DIP" id="DIP-27557N"/>
<dbReference type="FunCoup" id="Q9UHV9">
    <property type="interactions" value="1845"/>
</dbReference>
<dbReference type="IntAct" id="Q9UHV9">
    <property type="interactions" value="137"/>
</dbReference>
<dbReference type="MINT" id="Q9UHV9"/>
<dbReference type="STRING" id="9606.ENSP00000356989"/>
<dbReference type="ChEMBL" id="CHEMBL4295976"/>
<dbReference type="GlyGen" id="Q9UHV9">
    <property type="glycosylation" value="1 site, 1 O-linked glycan (1 site)"/>
</dbReference>
<dbReference type="iPTMnet" id="Q9UHV9"/>
<dbReference type="MetOSite" id="Q9UHV9"/>
<dbReference type="PhosphoSitePlus" id="Q9UHV9"/>
<dbReference type="SwissPalm" id="Q9UHV9"/>
<dbReference type="BioMuta" id="PFDN2"/>
<dbReference type="DMDM" id="12643887"/>
<dbReference type="jPOST" id="Q9UHV9"/>
<dbReference type="MassIVE" id="Q9UHV9"/>
<dbReference type="PaxDb" id="9606-ENSP00000356989"/>
<dbReference type="PeptideAtlas" id="Q9UHV9"/>
<dbReference type="ProteomicsDB" id="84419"/>
<dbReference type="Pumba" id="Q9UHV9"/>
<dbReference type="TopDownProteomics" id="Q9UHV9"/>
<dbReference type="Antibodypedia" id="34290">
    <property type="antibodies" value="180 antibodies from 28 providers"/>
</dbReference>
<dbReference type="DNASU" id="5202"/>
<dbReference type="Ensembl" id="ENST00000368010.4">
    <property type="protein sequence ID" value="ENSP00000356989.3"/>
    <property type="gene ID" value="ENSG00000143256.5"/>
</dbReference>
<dbReference type="GeneID" id="5202"/>
<dbReference type="KEGG" id="hsa:5202"/>
<dbReference type="MANE-Select" id="ENST00000368010.4">
    <property type="protein sequence ID" value="ENSP00000356989.3"/>
    <property type="RefSeq nucleotide sequence ID" value="NM_012394.4"/>
    <property type="RefSeq protein sequence ID" value="NP_036526.2"/>
</dbReference>
<dbReference type="UCSC" id="uc001fxu.4">
    <property type="organism name" value="human"/>
</dbReference>
<dbReference type="AGR" id="HGNC:8867"/>
<dbReference type="CTD" id="5202"/>
<dbReference type="DisGeNET" id="5202"/>
<dbReference type="GeneCards" id="PFDN2"/>
<dbReference type="HGNC" id="HGNC:8867">
    <property type="gene designation" value="PFDN2"/>
</dbReference>
<dbReference type="HPA" id="ENSG00000143256">
    <property type="expression patterns" value="Low tissue specificity"/>
</dbReference>
<dbReference type="MIM" id="613466">
    <property type="type" value="gene"/>
</dbReference>
<dbReference type="neXtProt" id="NX_Q9UHV9"/>
<dbReference type="OpenTargets" id="ENSG00000143256"/>
<dbReference type="PharmGKB" id="PA33208"/>
<dbReference type="VEuPathDB" id="HostDB:ENSG00000143256"/>
<dbReference type="eggNOG" id="KOG4098">
    <property type="taxonomic scope" value="Eukaryota"/>
</dbReference>
<dbReference type="GeneTree" id="ENSGT00390000009272"/>
<dbReference type="HOGENOM" id="CLU_113004_0_0_1"/>
<dbReference type="InParanoid" id="Q9UHV9"/>
<dbReference type="OMA" id="CFKMIGG"/>
<dbReference type="OrthoDB" id="29646at2759"/>
<dbReference type="PAN-GO" id="Q9UHV9">
    <property type="GO annotations" value="3 GO annotations based on evolutionary models"/>
</dbReference>
<dbReference type="PhylomeDB" id="Q9UHV9"/>
<dbReference type="TreeFam" id="TF313252"/>
<dbReference type="PathwayCommons" id="Q9UHV9"/>
<dbReference type="Reactome" id="R-HSA-389957">
    <property type="pathway name" value="Prefoldin mediated transfer of substrate to CCT/TriC"/>
</dbReference>
<dbReference type="SignaLink" id="Q9UHV9"/>
<dbReference type="SIGNOR" id="Q9UHV9"/>
<dbReference type="BioGRID-ORCS" id="5202">
    <property type="hits" value="825 hits in 1168 CRISPR screens"/>
</dbReference>
<dbReference type="ChiTaRS" id="PFDN2">
    <property type="organism name" value="human"/>
</dbReference>
<dbReference type="GeneWiki" id="PFDN2"/>
<dbReference type="GenomeRNAi" id="5202"/>
<dbReference type="Pharos" id="Q9UHV9">
    <property type="development level" value="Tbio"/>
</dbReference>
<dbReference type="PRO" id="PR:Q9UHV9"/>
<dbReference type="Proteomes" id="UP000005640">
    <property type="component" value="Chromosome 1"/>
</dbReference>
<dbReference type="RNAct" id="Q9UHV9">
    <property type="molecule type" value="protein"/>
</dbReference>
<dbReference type="Bgee" id="ENSG00000143256">
    <property type="expression patterns" value="Expressed in C1 segment of cervical spinal cord and 204 other cell types or tissues"/>
</dbReference>
<dbReference type="ExpressionAtlas" id="Q9UHV9">
    <property type="expression patterns" value="baseline and differential"/>
</dbReference>
<dbReference type="GO" id="GO:0005737">
    <property type="term" value="C:cytoplasm"/>
    <property type="evidence" value="ECO:0000314"/>
    <property type="project" value="UniProtKB"/>
</dbReference>
<dbReference type="GO" id="GO:0005829">
    <property type="term" value="C:cytosol"/>
    <property type="evidence" value="ECO:0000314"/>
    <property type="project" value="HPA"/>
</dbReference>
<dbReference type="GO" id="GO:0005739">
    <property type="term" value="C:mitochondrion"/>
    <property type="evidence" value="ECO:0000314"/>
    <property type="project" value="UniProtKB"/>
</dbReference>
<dbReference type="GO" id="GO:0005654">
    <property type="term" value="C:nucleoplasm"/>
    <property type="evidence" value="ECO:0000314"/>
    <property type="project" value="HPA"/>
</dbReference>
<dbReference type="GO" id="GO:0005634">
    <property type="term" value="C:nucleus"/>
    <property type="evidence" value="ECO:0000314"/>
    <property type="project" value="UniProtKB"/>
</dbReference>
<dbReference type="GO" id="GO:0016272">
    <property type="term" value="C:prefoldin complex"/>
    <property type="evidence" value="ECO:0000314"/>
    <property type="project" value="FlyBase"/>
</dbReference>
<dbReference type="GO" id="GO:0101031">
    <property type="term" value="C:protein folding chaperone complex"/>
    <property type="evidence" value="ECO:0000303"/>
    <property type="project" value="ComplexPortal"/>
</dbReference>
<dbReference type="GO" id="GO:1990062">
    <property type="term" value="C:RPAP3/R2TP/prefoldin-like complex"/>
    <property type="evidence" value="ECO:0000353"/>
    <property type="project" value="ComplexPortal"/>
</dbReference>
<dbReference type="GO" id="GO:0001540">
    <property type="term" value="F:amyloid-beta binding"/>
    <property type="evidence" value="ECO:0000314"/>
    <property type="project" value="FlyBase"/>
</dbReference>
<dbReference type="GO" id="GO:0044183">
    <property type="term" value="F:protein folding chaperone"/>
    <property type="evidence" value="ECO:0000353"/>
    <property type="project" value="AgBase"/>
</dbReference>
<dbReference type="GO" id="GO:0051082">
    <property type="term" value="F:unfolded protein binding"/>
    <property type="evidence" value="ECO:0000314"/>
    <property type="project" value="FlyBase"/>
</dbReference>
<dbReference type="GO" id="GO:0061077">
    <property type="term" value="P:chaperone-mediated protein folding"/>
    <property type="evidence" value="ECO:0000303"/>
    <property type="project" value="ComplexPortal"/>
</dbReference>
<dbReference type="GO" id="GO:1905907">
    <property type="term" value="P:negative regulation of amyloid fibril formation"/>
    <property type="evidence" value="ECO:0000314"/>
    <property type="project" value="FlyBase"/>
</dbReference>
<dbReference type="GO" id="GO:0051495">
    <property type="term" value="P:positive regulation of cytoskeleton organization"/>
    <property type="evidence" value="ECO:0000314"/>
    <property type="project" value="AgBase"/>
</dbReference>
<dbReference type="GO" id="GO:0006457">
    <property type="term" value="P:protein folding"/>
    <property type="evidence" value="ECO:0000314"/>
    <property type="project" value="FlyBase"/>
</dbReference>
<dbReference type="GO" id="GO:0050821">
    <property type="term" value="P:protein stabilization"/>
    <property type="evidence" value="ECO:0000303"/>
    <property type="project" value="ComplexPortal"/>
</dbReference>
<dbReference type="CDD" id="cd23163">
    <property type="entry name" value="Prefoldin_2"/>
    <property type="match status" value="1"/>
</dbReference>
<dbReference type="FunFam" id="1.10.287.370:FF:000002">
    <property type="entry name" value="Prefoldin subunit 2"/>
    <property type="match status" value="1"/>
</dbReference>
<dbReference type="Gene3D" id="1.10.287.370">
    <property type="match status" value="1"/>
</dbReference>
<dbReference type="InterPro" id="IPR027235">
    <property type="entry name" value="PFD2"/>
</dbReference>
<dbReference type="InterPro" id="IPR002777">
    <property type="entry name" value="PFD_beta-like"/>
</dbReference>
<dbReference type="InterPro" id="IPR009053">
    <property type="entry name" value="Prefoldin"/>
</dbReference>
<dbReference type="PANTHER" id="PTHR13303">
    <property type="entry name" value="PREFOLDIN SUBUNIT 2"/>
    <property type="match status" value="1"/>
</dbReference>
<dbReference type="Pfam" id="PF01920">
    <property type="entry name" value="Prefoldin_2"/>
    <property type="match status" value="1"/>
</dbReference>
<dbReference type="SUPFAM" id="SSF46579">
    <property type="entry name" value="Prefoldin"/>
    <property type="match status" value="1"/>
</dbReference>
<name>PFD2_HUMAN</name>
<reference key="1">
    <citation type="journal article" date="2000" name="Proc. Natl. Acad. Sci. U.S.A.">
        <title>Gene expression profiling in the human hypothalamus-pituitary-adrenal axis and full-length cDNA cloning.</title>
        <authorList>
            <person name="Hu R.-M."/>
            <person name="Han Z.-G."/>
            <person name="Song H.-D."/>
            <person name="Peng Y.-D."/>
            <person name="Huang Q.-H."/>
            <person name="Ren S.-X."/>
            <person name="Gu Y.-J."/>
            <person name="Huang C.-H."/>
            <person name="Li Y.-B."/>
            <person name="Jiang C.-L."/>
            <person name="Fu G."/>
            <person name="Zhang Q.-H."/>
            <person name="Gu B.-W."/>
            <person name="Dai M."/>
            <person name="Mao Y.-F."/>
            <person name="Gao G.-F."/>
            <person name="Rong R."/>
            <person name="Ye M."/>
            <person name="Zhou J."/>
            <person name="Xu S.-H."/>
            <person name="Gu J."/>
            <person name="Shi J.-X."/>
            <person name="Jin W.-R."/>
            <person name="Zhang C.-K."/>
            <person name="Wu T.-M."/>
            <person name="Huang G.-Y."/>
            <person name="Chen Z."/>
            <person name="Chen M.-D."/>
            <person name="Chen J.-L."/>
        </authorList>
    </citation>
    <scope>NUCLEOTIDE SEQUENCE [LARGE SCALE MRNA]</scope>
    <source>
        <tissue>Adrenal gland</tissue>
    </source>
</reference>
<reference key="2">
    <citation type="submission" date="1999-07" db="EMBL/GenBank/DDBJ databases">
        <authorList>
            <person name="Xu Y."/>
            <person name="Yu Y."/>
            <person name="Fang C."/>
            <person name="Zhang H."/>
            <person name="Ying H."/>
            <person name="Yan J."/>
            <person name="Chang Y."/>
        </authorList>
    </citation>
    <scope>NUCLEOTIDE SEQUENCE [MRNA]</scope>
    <source>
        <tissue>Liver</tissue>
    </source>
</reference>
<reference key="3">
    <citation type="journal article" date="2000" name="Genome Res.">
        <title>Cloning and functional analysis of cDNAs with open reading frames for 300 previously undefined genes expressed in CD34+ hematopoietic stem/progenitor cells.</title>
        <authorList>
            <person name="Zhang Q.-H."/>
            <person name="Ye M."/>
            <person name="Wu X.-Y."/>
            <person name="Ren S.-X."/>
            <person name="Zhao M."/>
            <person name="Zhao C.-J."/>
            <person name="Fu G."/>
            <person name="Shen Y."/>
            <person name="Fan H.-Y."/>
            <person name="Lu G."/>
            <person name="Zhong M."/>
            <person name="Xu X.-R."/>
            <person name="Han Z.-G."/>
            <person name="Zhang J.-W."/>
            <person name="Tao J."/>
            <person name="Huang Q.-H."/>
            <person name="Zhou J."/>
            <person name="Hu G.-X."/>
            <person name="Gu J."/>
            <person name="Chen S.-J."/>
            <person name="Chen Z."/>
        </authorList>
    </citation>
    <scope>NUCLEOTIDE SEQUENCE [LARGE SCALE MRNA]</scope>
    <source>
        <tissue>Umbilical cord blood</tissue>
    </source>
</reference>
<reference key="4">
    <citation type="journal article" date="2004" name="Genome Res.">
        <title>The status, quality, and expansion of the NIH full-length cDNA project: the Mammalian Gene Collection (MGC).</title>
        <authorList>
            <consortium name="The MGC Project Team"/>
        </authorList>
    </citation>
    <scope>NUCLEOTIDE SEQUENCE [LARGE SCALE MRNA]</scope>
    <source>
        <tissue>Prostate</tissue>
        <tissue>Skin</tissue>
    </source>
</reference>
<reference key="5">
    <citation type="journal article" date="1998" name="Cell">
        <title>Prefoldin, a chaperone that delivers unfolded proteins to cytosolic chaperonin.</title>
        <authorList>
            <person name="Vainberg I.E."/>
            <person name="Lewis S.A."/>
            <person name="Rommelaere H."/>
            <person name="Ampe C."/>
            <person name="Vandekerckhove J."/>
            <person name="Klein H.L."/>
            <person name="Cowan N.J."/>
        </authorList>
    </citation>
    <scope>FUNCTION</scope>
</reference>
<reference key="6">
    <citation type="journal article" date="2007" name="Mol. Cell">
        <title>S6K1-mediated disassembly of mitochondrial URI/PP1gamma complexes activates a negative feedback program that counters S6K1 survival signaling.</title>
        <authorList>
            <person name="Djouder N."/>
            <person name="Metzler S.C."/>
            <person name="Schmidt A."/>
            <person name="Wirbelauer C."/>
            <person name="Gstaiger M."/>
            <person name="Aebersold R."/>
            <person name="Hess D."/>
            <person name="Krek W."/>
        </authorList>
    </citation>
    <scope>INTERACTION WITH URI1</scope>
    <scope>SUBCELLULAR LOCATION</scope>
</reference>
<reference key="7">
    <citation type="journal article" date="2011" name="BMC Syst. Biol.">
        <title>Initial characterization of the human central proteome.</title>
        <authorList>
            <person name="Burkard T.R."/>
            <person name="Planyavsky M."/>
            <person name="Kaupe I."/>
            <person name="Breitwieser F.P."/>
            <person name="Buerckstuemmer T."/>
            <person name="Bennett K.L."/>
            <person name="Superti-Furga G."/>
            <person name="Colinge J."/>
        </authorList>
    </citation>
    <scope>IDENTIFICATION BY MASS SPECTROMETRY [LARGE SCALE ANALYSIS]</scope>
</reference>
<reference key="8">
    <citation type="journal article" date="2020" name="J. Proteome Res.">
        <title>Upstream ORF-Encoded ASDURF Is a Novel Prefoldin-like Subunit of the PAQosome.</title>
        <authorList>
            <person name="Cloutier P."/>
            <person name="Poitras C."/>
            <person name="Faubert D."/>
            <person name="Bouchard A."/>
            <person name="Blanchette M."/>
            <person name="Gauthier M.S."/>
            <person name="Coulombe B."/>
        </authorList>
    </citation>
    <scope>IDENTIFICATION IN THE PAQOSOME COMPLEX</scope>
    <scope>IDENTIFICATION BY MASS SPECTROMETRY</scope>
</reference>
<proteinExistence type="evidence at protein level"/>
<protein>
    <recommendedName>
        <fullName>Prefoldin subunit 2</fullName>
    </recommendedName>
</protein>
<feature type="chain" id="PRO_0000124835" description="Prefoldin subunit 2">
    <location>
        <begin position="1"/>
        <end position="154"/>
    </location>
</feature>
<feature type="region of interest" description="Disordered" evidence="2">
    <location>
        <begin position="124"/>
        <end position="154"/>
    </location>
</feature>
<feature type="compositionally biased region" description="Basic and acidic residues" evidence="2">
    <location>
        <begin position="124"/>
        <end position="139"/>
    </location>
</feature>
<feature type="compositionally biased region" description="Low complexity" evidence="2">
    <location>
        <begin position="140"/>
        <end position="154"/>
    </location>
</feature>
<feature type="sequence conflict" description="In Ref. 2; AAD47084." evidence="6" ref="2">
    <original>SGAGKGAVS</original>
    <variation>TPRRGRGRCP</variation>
    <location>
        <begin position="14"/>
        <end position="22"/>
    </location>
</feature>
<feature type="sequence conflict" description="In Ref. 3; AAF36151." evidence="6" ref="3">
    <location>
        <position position="15"/>
    </location>
</feature>
<feature type="sequence conflict" description="In Ref. 3; AAF36151." evidence="6" ref="3">
    <original>GFNRLR</original>
    <variation>SFNAF</variation>
    <location>
        <begin position="29"/>
        <end position="34"/>
    </location>
</feature>
<gene>
    <name type="primary">PFDN2</name>
    <name type="synonym">PFD2</name>
    <name type="ORF">HSPC231</name>
</gene>
<organism>
    <name type="scientific">Homo sapiens</name>
    <name type="common">Human</name>
    <dbReference type="NCBI Taxonomy" id="9606"/>
    <lineage>
        <taxon>Eukaryota</taxon>
        <taxon>Metazoa</taxon>
        <taxon>Chordata</taxon>
        <taxon>Craniata</taxon>
        <taxon>Vertebrata</taxon>
        <taxon>Euteleostomi</taxon>
        <taxon>Mammalia</taxon>
        <taxon>Eutheria</taxon>
        <taxon>Euarchontoglires</taxon>
        <taxon>Primates</taxon>
        <taxon>Haplorrhini</taxon>
        <taxon>Catarrhini</taxon>
        <taxon>Hominidae</taxon>
        <taxon>Homo</taxon>
    </lineage>
</organism>